<evidence type="ECO:0000250" key="1"/>
<evidence type="ECO:0000250" key="2">
    <source>
        <dbReference type="UniProtKB" id="Q62230"/>
    </source>
</evidence>
<evidence type="ECO:0000255" key="3"/>
<evidence type="ECO:0000255" key="4">
    <source>
        <dbReference type="PROSITE-ProRule" id="PRU00114"/>
    </source>
</evidence>
<evidence type="ECO:0000269" key="5">
    <source>
    </source>
</evidence>
<evidence type="ECO:0000269" key="6">
    <source>
    </source>
</evidence>
<evidence type="ECO:0000269" key="7">
    <source>
    </source>
</evidence>
<evidence type="ECO:0000269" key="8">
    <source>
    </source>
</evidence>
<evidence type="ECO:0000269" key="9">
    <source>
    </source>
</evidence>
<evidence type="ECO:0000269" key="10">
    <source>
    </source>
</evidence>
<evidence type="ECO:0000303" key="11">
    <source>
    </source>
</evidence>
<evidence type="ECO:0000303" key="12">
    <source>
    </source>
</evidence>
<evidence type="ECO:0000305" key="13"/>
<name>SN_HUMAN</name>
<feature type="signal peptide" evidence="1">
    <location>
        <begin position="1"/>
        <end position="19"/>
    </location>
</feature>
<feature type="chain" id="PRO_0000014968" description="Sialoadhesin">
    <location>
        <begin position="20"/>
        <end position="1709"/>
    </location>
</feature>
<feature type="topological domain" description="Extracellular" evidence="3">
    <location>
        <begin position="20"/>
        <end position="1641"/>
    </location>
</feature>
<feature type="transmembrane region" description="Helical" evidence="3">
    <location>
        <begin position="1642"/>
        <end position="1662"/>
    </location>
</feature>
<feature type="topological domain" description="Cytoplasmic" evidence="3">
    <location>
        <begin position="1663"/>
        <end position="1709"/>
    </location>
</feature>
<feature type="domain" description="Ig-like V-type">
    <location>
        <begin position="20"/>
        <end position="136"/>
    </location>
</feature>
<feature type="domain" description="Ig-like C2-type 1">
    <location>
        <begin position="139"/>
        <end position="233"/>
    </location>
</feature>
<feature type="domain" description="Ig-like C2-type 2">
    <location>
        <begin position="238"/>
        <end position="320"/>
    </location>
</feature>
<feature type="domain" description="Ig-like C2-type 3">
    <location>
        <begin position="326"/>
        <end position="405"/>
    </location>
</feature>
<feature type="domain" description="Ig-like C2-type 4">
    <location>
        <begin position="411"/>
        <end position="507"/>
    </location>
</feature>
<feature type="domain" description="Ig-like C2-type 5">
    <location>
        <begin position="511"/>
        <end position="593"/>
    </location>
</feature>
<feature type="domain" description="Ig-like C2-type 6">
    <location>
        <begin position="601"/>
        <end position="705"/>
    </location>
</feature>
<feature type="domain" description="Ig-like C2-type 7">
    <location>
        <begin position="708"/>
        <end position="785"/>
    </location>
</feature>
<feature type="domain" description="Ig-like C2-type 8">
    <location>
        <begin position="799"/>
        <end position="894"/>
    </location>
</feature>
<feature type="domain" description="Ig-like C2-type 9">
    <location>
        <begin position="898"/>
        <end position="977"/>
    </location>
</feature>
<feature type="domain" description="Ig-like C2-type 10">
    <location>
        <begin position="984"/>
        <end position="1083"/>
    </location>
</feature>
<feature type="domain" description="Ig-like C2-type 11">
    <location>
        <begin position="1085"/>
        <end position="1165"/>
    </location>
</feature>
<feature type="domain" description="Ig-like C2-type 12">
    <location>
        <begin position="1176"/>
        <end position="1248"/>
    </location>
</feature>
<feature type="domain" description="Ig-like C2-type 13">
    <location>
        <begin position="1259"/>
        <end position="1341"/>
    </location>
</feature>
<feature type="domain" description="Ig-like C2-type 14">
    <location>
        <begin position="1350"/>
        <end position="1442"/>
    </location>
</feature>
<feature type="domain" description="Ig-like C2-type 15">
    <location>
        <begin position="1445"/>
        <end position="1528"/>
    </location>
</feature>
<feature type="domain" description="Ig-like C2-type 16">
    <location>
        <begin position="1536"/>
        <end position="1631"/>
    </location>
</feature>
<feature type="binding site" evidence="2">
    <location>
        <position position="63"/>
    </location>
    <ligand>
        <name>N-acetylneuraminate</name>
        <dbReference type="ChEBI" id="CHEBI:35418"/>
    </ligand>
</feature>
<feature type="binding site" evidence="2">
    <location>
        <position position="116"/>
    </location>
    <ligand>
        <name>N-acetylneuraminate</name>
        <dbReference type="ChEBI" id="CHEBI:35418"/>
    </ligand>
</feature>
<feature type="binding site" evidence="1">
    <location>
        <begin position="122"/>
        <end position="126"/>
    </location>
    <ligand>
        <name>N-acetylneuraminate</name>
        <dbReference type="ChEBI" id="CHEBI:35418"/>
    </ligand>
</feature>
<feature type="glycosylation site" description="N-linked (GlcNAc...) asparagine" evidence="3">
    <location>
        <position position="159"/>
    </location>
</feature>
<feature type="glycosylation site" description="N-linked (GlcNAc...) asparagine" evidence="3">
    <location>
        <position position="265"/>
    </location>
</feature>
<feature type="glycosylation site" description="N-linked (GlcNAc...) asparagine" evidence="3">
    <location>
        <position position="339"/>
    </location>
</feature>
<feature type="glycosylation site" description="N-linked (GlcNAc...) asparagine" evidence="3">
    <location>
        <position position="499"/>
    </location>
</feature>
<feature type="glycosylation site" description="N-linked (GlcNAc...) asparagine" evidence="3">
    <location>
        <position position="697"/>
    </location>
</feature>
<feature type="glycosylation site" description="N-linked (GlcNAc...) asparagine" evidence="3">
    <location>
        <position position="726"/>
    </location>
</feature>
<feature type="glycosylation site" description="N-linked (GlcNAc...) asparagine" evidence="3">
    <location>
        <position position="730"/>
    </location>
</feature>
<feature type="glycosylation site" description="N-linked (GlcNAc...) asparagine" evidence="3">
    <location>
        <position position="741"/>
    </location>
</feature>
<feature type="glycosylation site" description="N-linked (GlcNAc...) asparagine" evidence="3">
    <location>
        <position position="886"/>
    </location>
</feature>
<feature type="glycosylation site" description="N-linked (GlcNAc...) asparagine" evidence="3">
    <location>
        <position position="1104"/>
    </location>
</feature>
<feature type="glycosylation site" description="N-linked (GlcNAc...) asparagine" evidence="3">
    <location>
        <position position="1138"/>
    </location>
</feature>
<feature type="glycosylation site" description="N-linked (GlcNAc...) asparagine" evidence="3">
    <location>
        <position position="1251"/>
    </location>
</feature>
<feature type="glycosylation site" description="N-linked (GlcNAc...) asparagine" evidence="3">
    <location>
        <position position="1462"/>
    </location>
</feature>
<feature type="glycosylation site" description="N-linked (GlcNAc...) asparagine" evidence="3">
    <location>
        <position position="1476"/>
    </location>
</feature>
<feature type="disulfide bond" evidence="4">
    <location>
        <begin position="36"/>
        <end position="166"/>
    </location>
</feature>
<feature type="disulfide bond" evidence="4">
    <location>
        <begin position="41"/>
        <end position="98"/>
    </location>
</feature>
<feature type="disulfide bond" evidence="4">
    <location>
        <begin position="160"/>
        <end position="217"/>
    </location>
</feature>
<feature type="disulfide bond" evidence="4">
    <location>
        <begin position="262"/>
        <end position="305"/>
    </location>
</feature>
<feature type="disulfide bond" evidence="4">
    <location>
        <begin position="346"/>
        <end position="390"/>
    </location>
</feature>
<feature type="disulfide bond" evidence="4">
    <location>
        <begin position="433"/>
        <end position="491"/>
    </location>
</feature>
<feature type="disulfide bond" evidence="4">
    <location>
        <begin position="531"/>
        <end position="575"/>
    </location>
</feature>
<feature type="disulfide bond" evidence="4">
    <location>
        <begin position="624"/>
        <end position="689"/>
    </location>
</feature>
<feature type="disulfide bond" evidence="4">
    <location>
        <begin position="729"/>
        <end position="774"/>
    </location>
</feature>
<feature type="disulfide bond" evidence="4">
    <location>
        <begin position="817"/>
        <end position="876"/>
    </location>
</feature>
<feature type="disulfide bond" evidence="4">
    <location>
        <begin position="916"/>
        <end position="960"/>
    </location>
</feature>
<feature type="disulfide bond" evidence="4">
    <location>
        <begin position="1005"/>
        <end position="1067"/>
    </location>
</feature>
<feature type="disulfide bond" evidence="4">
    <location>
        <begin position="1107"/>
        <end position="1149"/>
    </location>
</feature>
<feature type="disulfide bond" evidence="4">
    <location>
        <begin position="1193"/>
        <end position="1241"/>
    </location>
</feature>
<feature type="disulfide bond" evidence="4">
    <location>
        <begin position="1281"/>
        <end position="1324"/>
    </location>
</feature>
<feature type="disulfide bond" evidence="4">
    <location>
        <begin position="1367"/>
        <end position="1425"/>
    </location>
</feature>
<feature type="disulfide bond" evidence="4">
    <location>
        <begin position="1465"/>
        <end position="1511"/>
    </location>
</feature>
<feature type="disulfide bond" evidence="4">
    <location>
        <begin position="1554"/>
        <end position="1613"/>
    </location>
</feature>
<feature type="splice variant" id="VSP_002571" description="In isoform 2." evidence="11">
    <original>ALHRLHQFQQLLWVLGLLVGLLLLLLGLGACYTWRRRRVCKQSMGENSVEMAFQKETTQLIDPDAATCETSTCAPPLG</original>
    <variation>GEGRGLHLPGHSAQKPSS</variation>
    <location>
        <begin position="1632"/>
        <end position="1709"/>
    </location>
</feature>
<feature type="splice variant" id="VSP_002572" description="In isoform 3." evidence="12">
    <original>RRRRVCKQSMGENSVEMAFQKETTQLIDPDAATCETSTCAPPLG</original>
    <variation>SSLILMQPHVRPQPVPHPWADQWCCLPSGGESGQNL</variation>
    <location>
        <begin position="1666"/>
        <end position="1709"/>
    </location>
</feature>
<feature type="sequence variant" id="VAR_049943" description="In dbSNP:rs35953127.">
    <original>V</original>
    <variation>L</variation>
    <location>
        <position position="141"/>
    </location>
</feature>
<feature type="sequence variant" id="VAR_024502" description="In dbSNP:rs6037651.">
    <original>V</original>
    <variation>M</variation>
    <location>
        <position position="221"/>
    </location>
</feature>
<feature type="sequence variant" id="VAR_014136" description="In dbSNP:rs625372.">
    <original>K</original>
    <variation>R</variation>
    <location>
        <position position="239"/>
    </location>
</feature>
<feature type="sequence variant" id="VAR_049944" description="In dbSNP:rs34924243.">
    <original>R</original>
    <variation>H</variation>
    <location>
        <position position="464"/>
    </location>
</feature>
<feature type="sequence variant" id="VAR_014137" description="In dbSNP:rs709012.">
    <original>H</original>
    <variation>P</variation>
    <location>
        <position position="919"/>
    </location>
</feature>
<feature type="sequence variant" id="VAR_021926" description="In dbSNP:rs3746638.">
    <original>A</original>
    <variation>V</variation>
    <location>
        <position position="974"/>
    </location>
</feature>
<feature type="sequence variant" id="VAR_021927" description="In dbSNP:rs3746636.">
    <original>S</original>
    <variation>Y</variation>
    <location>
        <position position="1335"/>
    </location>
</feature>
<feature type="sequence variant" id="VAR_049945" description="In dbSNP:rs16988873.">
    <original>R</original>
    <variation>W</variation>
    <location>
        <position position="1487"/>
    </location>
</feature>
<feature type="sequence variant" id="VAR_014138" description="In dbSNP:rs2853217.">
    <original>A</original>
    <variation>P</variation>
    <location>
        <position position="1519"/>
    </location>
</feature>
<feature type="mutagenesis site" description="Complete loss of sialic acid recognition capacity." evidence="10">
    <original>R</original>
    <variation>A</variation>
    <location>
        <position position="116"/>
    </location>
</feature>
<feature type="sequence conflict" description="In Ref. 1; AAK00757." evidence="13" ref="1">
    <original>A</original>
    <variation>T</variation>
    <location>
        <position position="1349"/>
    </location>
</feature>
<feature type="sequence conflict" description="In Ref. 3; BAB15749/BAB15769." evidence="13" ref="3">
    <original>A</original>
    <variation>V</variation>
    <location>
        <position position="1519"/>
    </location>
</feature>
<proteinExistence type="evidence at protein level"/>
<reference key="1">
    <citation type="journal article" date="2001" name="Blood">
        <title>Characterization of human sialoadhesin, a sialic acid binding receptor expressed by resident and inflammatory macrophage populations.</title>
        <authorList>
            <person name="Hartnell A."/>
            <person name="Steel J."/>
            <person name="Turley H."/>
            <person name="Jones M."/>
            <person name="Jackson D.G."/>
            <person name="Crocker P.R."/>
        </authorList>
    </citation>
    <scope>NUCLEOTIDE SEQUENCE [MRNA] (ISOFORM 1)</scope>
    <scope>CHARACTERIZATION</scope>
    <source>
        <tissue>Monocyte</tissue>
    </source>
</reference>
<reference key="2">
    <citation type="journal article" date="2001" name="Nature">
        <title>The DNA sequence and comparative analysis of human chromosome 20.</title>
        <authorList>
            <person name="Deloukas P."/>
            <person name="Matthews L.H."/>
            <person name="Ashurst J.L."/>
            <person name="Burton J."/>
            <person name="Gilbert J.G.R."/>
            <person name="Jones M."/>
            <person name="Stavrides G."/>
            <person name="Almeida J.P."/>
            <person name="Babbage A.K."/>
            <person name="Bagguley C.L."/>
            <person name="Bailey J."/>
            <person name="Barlow K.F."/>
            <person name="Bates K.N."/>
            <person name="Beard L.M."/>
            <person name="Beare D.M."/>
            <person name="Beasley O.P."/>
            <person name="Bird C.P."/>
            <person name="Blakey S.E."/>
            <person name="Bridgeman A.M."/>
            <person name="Brown A.J."/>
            <person name="Buck D."/>
            <person name="Burrill W.D."/>
            <person name="Butler A.P."/>
            <person name="Carder C."/>
            <person name="Carter N.P."/>
            <person name="Chapman J.C."/>
            <person name="Clamp M."/>
            <person name="Clark G."/>
            <person name="Clark L.N."/>
            <person name="Clark S.Y."/>
            <person name="Clee C.M."/>
            <person name="Clegg S."/>
            <person name="Cobley V.E."/>
            <person name="Collier R.E."/>
            <person name="Connor R.E."/>
            <person name="Corby N.R."/>
            <person name="Coulson A."/>
            <person name="Coville G.J."/>
            <person name="Deadman R."/>
            <person name="Dhami P.D."/>
            <person name="Dunn M."/>
            <person name="Ellington A.G."/>
            <person name="Frankland J.A."/>
            <person name="Fraser A."/>
            <person name="French L."/>
            <person name="Garner P."/>
            <person name="Grafham D.V."/>
            <person name="Griffiths C."/>
            <person name="Griffiths M.N.D."/>
            <person name="Gwilliam R."/>
            <person name="Hall R.E."/>
            <person name="Hammond S."/>
            <person name="Harley J.L."/>
            <person name="Heath P.D."/>
            <person name="Ho S."/>
            <person name="Holden J.L."/>
            <person name="Howden P.J."/>
            <person name="Huckle E."/>
            <person name="Hunt A.R."/>
            <person name="Hunt S.E."/>
            <person name="Jekosch K."/>
            <person name="Johnson C.M."/>
            <person name="Johnson D."/>
            <person name="Kay M.P."/>
            <person name="Kimberley A.M."/>
            <person name="King A."/>
            <person name="Knights A."/>
            <person name="Laird G.K."/>
            <person name="Lawlor S."/>
            <person name="Lehvaeslaiho M.H."/>
            <person name="Leversha M.A."/>
            <person name="Lloyd C."/>
            <person name="Lloyd D.M."/>
            <person name="Lovell J.D."/>
            <person name="Marsh V.L."/>
            <person name="Martin S.L."/>
            <person name="McConnachie L.J."/>
            <person name="McLay K."/>
            <person name="McMurray A.A."/>
            <person name="Milne S.A."/>
            <person name="Mistry D."/>
            <person name="Moore M.J.F."/>
            <person name="Mullikin J.C."/>
            <person name="Nickerson T."/>
            <person name="Oliver K."/>
            <person name="Parker A."/>
            <person name="Patel R."/>
            <person name="Pearce T.A.V."/>
            <person name="Peck A.I."/>
            <person name="Phillimore B.J.C.T."/>
            <person name="Prathalingam S.R."/>
            <person name="Plumb R.W."/>
            <person name="Ramsay H."/>
            <person name="Rice C.M."/>
            <person name="Ross M.T."/>
            <person name="Scott C.E."/>
            <person name="Sehra H.K."/>
            <person name="Shownkeen R."/>
            <person name="Sims S."/>
            <person name="Skuce C.D."/>
            <person name="Smith M.L."/>
            <person name="Soderlund C."/>
            <person name="Steward C.A."/>
            <person name="Sulston J.E."/>
            <person name="Swann R.M."/>
            <person name="Sycamore N."/>
            <person name="Taylor R."/>
            <person name="Tee L."/>
            <person name="Thomas D.W."/>
            <person name="Thorpe A."/>
            <person name="Tracey A."/>
            <person name="Tromans A.C."/>
            <person name="Vaudin M."/>
            <person name="Wall M."/>
            <person name="Wallis J.M."/>
            <person name="Whitehead S.L."/>
            <person name="Whittaker P."/>
            <person name="Willey D.L."/>
            <person name="Williams L."/>
            <person name="Williams S.A."/>
            <person name="Wilming L."/>
            <person name="Wray P.W."/>
            <person name="Hubbard T."/>
            <person name="Durbin R.M."/>
            <person name="Bentley D.R."/>
            <person name="Beck S."/>
            <person name="Rogers J."/>
        </authorList>
    </citation>
    <scope>NUCLEOTIDE SEQUENCE [LARGE SCALE GENOMIC DNA] (ISOFORMS 1 AND 2)</scope>
</reference>
<reference key="3">
    <citation type="journal article" date="2000" name="DNA Res.">
        <title>Characterization of long cDNA clones from human adult spleen.</title>
        <authorList>
            <person name="Hattori A."/>
            <person name="Okumura K."/>
            <person name="Nagase T."/>
            <person name="Kikuno R."/>
            <person name="Hirosawa M."/>
            <person name="Ohara O."/>
        </authorList>
    </citation>
    <scope>NUCLEOTIDE SEQUENCE [LARGE SCALE MRNA] OF 733-1709 (ISOFORMS 1 AND 2)</scope>
    <source>
        <tissue>Spleen</tissue>
    </source>
</reference>
<reference key="4">
    <citation type="journal article" date="2004" name="Nat. Genet.">
        <title>Complete sequencing and characterization of 21,243 full-length human cDNAs.</title>
        <authorList>
            <person name="Ota T."/>
            <person name="Suzuki Y."/>
            <person name="Nishikawa T."/>
            <person name="Otsuki T."/>
            <person name="Sugiyama T."/>
            <person name="Irie R."/>
            <person name="Wakamatsu A."/>
            <person name="Hayashi K."/>
            <person name="Sato H."/>
            <person name="Nagai K."/>
            <person name="Kimura K."/>
            <person name="Makita H."/>
            <person name="Sekine M."/>
            <person name="Obayashi M."/>
            <person name="Nishi T."/>
            <person name="Shibahara T."/>
            <person name="Tanaka T."/>
            <person name="Ishii S."/>
            <person name="Yamamoto J."/>
            <person name="Saito K."/>
            <person name="Kawai Y."/>
            <person name="Isono Y."/>
            <person name="Nakamura Y."/>
            <person name="Nagahari K."/>
            <person name="Murakami K."/>
            <person name="Yasuda T."/>
            <person name="Iwayanagi T."/>
            <person name="Wagatsuma M."/>
            <person name="Shiratori A."/>
            <person name="Sudo H."/>
            <person name="Hosoiri T."/>
            <person name="Kaku Y."/>
            <person name="Kodaira H."/>
            <person name="Kondo H."/>
            <person name="Sugawara M."/>
            <person name="Takahashi M."/>
            <person name="Kanda K."/>
            <person name="Yokoi T."/>
            <person name="Furuya T."/>
            <person name="Kikkawa E."/>
            <person name="Omura Y."/>
            <person name="Abe K."/>
            <person name="Kamihara K."/>
            <person name="Katsuta N."/>
            <person name="Sato K."/>
            <person name="Tanikawa M."/>
            <person name="Yamazaki M."/>
            <person name="Ninomiya K."/>
            <person name="Ishibashi T."/>
            <person name="Yamashita H."/>
            <person name="Murakawa K."/>
            <person name="Fujimori K."/>
            <person name="Tanai H."/>
            <person name="Kimata M."/>
            <person name="Watanabe M."/>
            <person name="Hiraoka S."/>
            <person name="Chiba Y."/>
            <person name="Ishida S."/>
            <person name="Ono Y."/>
            <person name="Takiguchi S."/>
            <person name="Watanabe S."/>
            <person name="Yosida M."/>
            <person name="Hotuta T."/>
            <person name="Kusano J."/>
            <person name="Kanehori K."/>
            <person name="Takahashi-Fujii A."/>
            <person name="Hara H."/>
            <person name="Tanase T.-O."/>
            <person name="Nomura Y."/>
            <person name="Togiya S."/>
            <person name="Komai F."/>
            <person name="Hara R."/>
            <person name="Takeuchi K."/>
            <person name="Arita M."/>
            <person name="Imose N."/>
            <person name="Musashino K."/>
            <person name="Yuuki H."/>
            <person name="Oshima A."/>
            <person name="Sasaki N."/>
            <person name="Aotsuka S."/>
            <person name="Yoshikawa Y."/>
            <person name="Matsunawa H."/>
            <person name="Ichihara T."/>
            <person name="Shiohata N."/>
            <person name="Sano S."/>
            <person name="Moriya S."/>
            <person name="Momiyama H."/>
            <person name="Satoh N."/>
            <person name="Takami S."/>
            <person name="Terashima Y."/>
            <person name="Suzuki O."/>
            <person name="Nakagawa S."/>
            <person name="Senoh A."/>
            <person name="Mizoguchi H."/>
            <person name="Goto Y."/>
            <person name="Shimizu F."/>
            <person name="Wakebe H."/>
            <person name="Hishigaki H."/>
            <person name="Watanabe T."/>
            <person name="Sugiyama A."/>
            <person name="Takemoto M."/>
            <person name="Kawakami B."/>
            <person name="Yamazaki M."/>
            <person name="Watanabe K."/>
            <person name="Kumagai A."/>
            <person name="Itakura S."/>
            <person name="Fukuzumi Y."/>
            <person name="Fujimori Y."/>
            <person name="Komiyama M."/>
            <person name="Tashiro H."/>
            <person name="Tanigami A."/>
            <person name="Fujiwara T."/>
            <person name="Ono T."/>
            <person name="Yamada K."/>
            <person name="Fujii Y."/>
            <person name="Ozaki K."/>
            <person name="Hirao M."/>
            <person name="Ohmori Y."/>
            <person name="Kawabata A."/>
            <person name="Hikiji T."/>
            <person name="Kobatake N."/>
            <person name="Inagaki H."/>
            <person name="Ikema Y."/>
            <person name="Okamoto S."/>
            <person name="Okitani R."/>
            <person name="Kawakami T."/>
            <person name="Noguchi S."/>
            <person name="Itoh T."/>
            <person name="Shigeta K."/>
            <person name="Senba T."/>
            <person name="Matsumura K."/>
            <person name="Nakajima Y."/>
            <person name="Mizuno T."/>
            <person name="Morinaga M."/>
            <person name="Sasaki M."/>
            <person name="Togashi T."/>
            <person name="Oyama M."/>
            <person name="Hata H."/>
            <person name="Watanabe M."/>
            <person name="Komatsu T."/>
            <person name="Mizushima-Sugano J."/>
            <person name="Satoh T."/>
            <person name="Shirai Y."/>
            <person name="Takahashi Y."/>
            <person name="Nakagawa K."/>
            <person name="Okumura K."/>
            <person name="Nagase T."/>
            <person name="Nomura N."/>
            <person name="Kikuchi H."/>
            <person name="Masuho Y."/>
            <person name="Yamashita R."/>
            <person name="Nakai K."/>
            <person name="Yada T."/>
            <person name="Nakamura Y."/>
            <person name="Ohara O."/>
            <person name="Isogai T."/>
            <person name="Sugano S."/>
        </authorList>
    </citation>
    <scope>NUCLEOTIDE SEQUENCE [LARGE SCALE MRNA] OF 1539-1709 (ISOFORM 3)</scope>
    <source>
        <tissue>Thymus</tissue>
    </source>
</reference>
<reference key="5">
    <citation type="journal article" date="2003" name="Mol. Microbiol.">
        <title>Recognition of sialylated meningococcal lipopolysaccharide by siglecs expressed on myeloid cells leads to enhanced bacterial uptake.</title>
        <authorList>
            <person name="Jones C."/>
            <person name="Virji M."/>
            <person name="Crocker P.R."/>
        </authorList>
    </citation>
    <scope>FUNCTION</scope>
</reference>
<reference key="6">
    <citation type="journal article" date="2015" name="Cell Res.">
        <title>Siglec1 suppresses antiviral innate immune response by inducing TBK1 degradation via the ubiquitin ligase TRIM27.</title>
        <authorList>
            <person name="Zheng Q."/>
            <person name="Hou J."/>
            <person name="Zhou Y."/>
            <person name="Yang Y."/>
            <person name="Xie B."/>
            <person name="Cao X."/>
        </authorList>
    </citation>
    <scope>FUNCTION</scope>
    <scope>INTERACTION WITH TYROBP</scope>
    <scope>INDUCTION BY VIRAL INFECTION</scope>
</reference>
<reference key="7">
    <citation type="journal article" date="2017" name="PLoS Pathog.">
        <title>Siglec-1 initiates formation of the virus-containing compartment and enhances macrophage-to-T cell transmission of HIV-1.</title>
        <authorList>
            <person name="Hammonds J.E."/>
            <person name="Beeman N."/>
            <person name="Ding L."/>
            <person name="Takushi S."/>
            <person name="Francis A.C."/>
            <person name="Wang J.J."/>
            <person name="Melikyan G.B."/>
            <person name="Spearman P."/>
        </authorList>
    </citation>
    <scope>FUNCTION</scope>
    <scope>INDUCTION BY INTERFERON-ALPHA</scope>
    <scope>SUBCELLULAR LOCATION</scope>
</reference>
<reference key="8">
    <citation type="journal article" date="2019" name="Nat. Microbiol.">
        <title>Anti-Siglec-1 antibodies block Ebola viral uptake and decrease cytoplasmic viral entry.</title>
        <authorList>
            <person name="Perez-Zsolt D."/>
            <person name="Erkizia I."/>
            <person name="Pino M."/>
            <person name="Garcia-Gallo M."/>
            <person name="Martin M.T."/>
            <person name="Benet S."/>
            <person name="Chojnacki J."/>
            <person name="Fernandez-Figueras M.T."/>
            <person name="Guerrero D."/>
            <person name="Urrea V."/>
            <person name="Muniz-Trabudua X."/>
            <person name="Kremer L."/>
            <person name="Martinez-Picado J."/>
            <person name="Izquierdo-Useros N."/>
        </authorList>
    </citation>
    <scope>FUNCTION (MICROBIAL INFECTION)</scope>
</reference>
<reference key="9">
    <citation type="journal article" date="2021" name="J. Extracell. Vesicles">
        <title>Dissemination of Mycobacterium tuberculosis is associated to a SIGLEC1 null variant that limits antigen exchange via trafficking extracellular vesicles.</title>
        <authorList>
            <person name="Benet S."/>
            <person name="Galvez C."/>
            <person name="Drobniewski F."/>
            <person name="Kontsevaya I."/>
            <person name="Arias L."/>
            <person name="Monguio-Tortajada M."/>
            <person name="Erkizia I."/>
            <person name="Urrea V."/>
            <person name="Ong R.Y."/>
            <person name="Luquin M."/>
            <person name="Dupont M."/>
            <person name="Chojnacki J."/>
            <person name="Dalmau J."/>
            <person name="Cardona P."/>
            <person name="Neyrolles O."/>
            <person name="Lugo-Villarino G."/>
            <person name="Verollet C."/>
            <person name="Julian E."/>
            <person name="Furrer H."/>
            <person name="Guenthard H.F."/>
            <person name="Crocker P.R."/>
            <person name="Tapia G."/>
            <person name="Borras F.E."/>
            <person name="Fellay J."/>
            <person name="McLaren P.J."/>
            <person name="Telenti A."/>
            <person name="Cardona P.J."/>
            <person name="Clotet B."/>
            <person name="Vilaplana C."/>
            <person name="Martinez-Picado J."/>
            <person name="Izquierdo-Useros N."/>
        </authorList>
    </citation>
    <scope>FUNCTION</scope>
</reference>
<reference key="10">
    <citation type="journal article" date="2021" name="Cell. Mol. Immunol.">
        <title>SARS-CoV-2 interaction with Siglec-1 mediates trans-infection by dendritic cells.</title>
        <authorList>
            <person name="Perez-Zsolt D."/>
            <person name="Munoz-Basagoiti J."/>
            <person name="Rodon J."/>
            <person name="Elosua-Bayes M."/>
            <person name="Raich-Regue D."/>
            <person name="Risco C."/>
            <person name="Sachse M."/>
            <person name="Pino M."/>
            <person name="Gumber S."/>
            <person name="Paiardini M."/>
            <person name="Chojnacki J."/>
            <person name="Erkizia I."/>
            <person name="Muniz-Trabudua X."/>
            <person name="Ballana E."/>
            <person name="Riveira-Munoz E."/>
            <person name="Noguera-Julian M."/>
            <person name="Paredes R."/>
            <person name="Trinite B."/>
            <person name="Tarres-Freixas F."/>
            <person name="Blanco I."/>
            <person name="Guallar V."/>
            <person name="Carrillo J."/>
            <person name="Blanco J."/>
            <person name="Telenti A."/>
            <person name="Heyn H."/>
            <person name="Segales J."/>
            <person name="Clotet B."/>
            <person name="Martinez-Picado J."/>
            <person name="Vergara-Alert J."/>
            <person name="Izquierdo-Useros N."/>
        </authorList>
    </citation>
    <scope>FUNCTION</scope>
    <scope>SUBCELLULAR LOCATION</scope>
    <scope>MUTAGENESIS OF ARG-116</scope>
</reference>
<gene>
    <name type="primary">SIGLEC1</name>
    <name type="synonym">SN</name>
</gene>
<keyword id="KW-0025">Alternative splicing</keyword>
<keyword id="KW-0130">Cell adhesion</keyword>
<keyword id="KW-1003">Cell membrane</keyword>
<keyword id="KW-1015">Disulfide bond</keyword>
<keyword id="KW-0254">Endocytosis</keyword>
<keyword id="KW-0325">Glycoprotein</keyword>
<keyword id="KW-0393">Immunoglobulin domain</keyword>
<keyword id="KW-0430">Lectin</keyword>
<keyword id="KW-0472">Membrane</keyword>
<keyword id="KW-1267">Proteomics identification</keyword>
<keyword id="KW-1185">Reference proteome</keyword>
<keyword id="KW-0677">Repeat</keyword>
<keyword id="KW-0964">Secreted</keyword>
<keyword id="KW-0732">Signal</keyword>
<keyword id="KW-0812">Transmembrane</keyword>
<keyword id="KW-1133">Transmembrane helix</keyword>
<sequence length="1709" mass="182624">MGFLPKLLLLASFFPAGQASWGVSSPQDVQGVKGSCLLIPCIFSFPADVEVPDGITAIWYYDYSGQRQVVSHSADPKLVEARFRGRTEFMGNPEHRVCNLLLKDLQPEDSGSYNFRFEISEVNRWSDVKGTLVTVTEEPRVPTIASPVELLEGTEVDFNCSTPYVCLQEQVRLQWQGQDPARSVTFNSQKFEPTGVGHLETLHMAMSWQDHGRILRCQLSVANHRAQSEIHLQVKYAPKGVKILLSPSGRNILPGELVTLTCQVNSSYPAVSSIKWLKDGVRLQTKTGVLHLPQAAWSDAGVYTCQAENGVGSLVSPPISLHIFMAEVQVSPAGPILENQTVTLVCNTPNEAPSDLRYSWYKNHVLLEDAHSHTLRLHLATRADTGFYFCEVQNVHGSERSGPVSVVVNHPPLTPVLTAFLETQAGLVGILHCSVVSEPLATLVLSHGGHILASTSGDSDHSPRFSGTSGPNSLRLEIRDLEETDSGEYKCSATNSLGNATSTLDFHANAARLLISPAAEVVEGQAVTLSCRSGLSPTPDARFSWYLNGALLHEGPGSSLLLPAASSTDAGSYHCRARDGHSASGPSSPAVLTVLYPPRQPTFTTRLDLDAAGAGAGRRGLLLCRVDSDPPARLQLLHKDRVVATSLPSGGGCSTCGGCSPRMKVTKAPNLLRVEIHNPLLEEEGLYLCEASNALGNASTSATFNGQATVLAIAPSHTLQEGTEANLTCNVSREAAGSPANFSWFRNGVLWAQGPLETVTLLPVARTDAALYACRILTEAGAQLSTPVLLSVLYPPDRPKLSALLDMGQGHMALFICTVDSRPLALLALFHGEHLLATSLGPQVPSHGRFQAKAEANSLKLEVRELGLGDSGSYRCEATNVLGSSNTSLFFQVRGAWVQVSPSPELQEGQAVVLSCQVHTGVPEGTSYRWYRDGQPLQESTSATLRFAAITLTQAGAYHCQAQAPGSATTSLAAPISLHVSYAPRHVTLTTLMDTGPGRLGLLLCRVDSDPPAQLRLLHGDRLVASTLQGVGGPEGSSPRLHVAVAPNTLRLEIHGAMLEDEGVYICEASNTLGQASASADFDAQAVNVQVWPGATVREGQLVNLTCLVWTTHPAQLTYTWYQDGQQRLDAHSIPLPNVTVRDATSYRCGVGPPGRAPRLSRPITLDVLYAPRNLRLTYLLESHGGQLALVLCTVDSRPPAQLALSHAGRLLASSTAASVPNTLRLELRGPQPRDEGFYSCSARSPLGQANTSLELRLEGVRVILAPEAAVPEGAPITVTCADPAAHAPTLYTWYHNGRWLQEGPAASLSFLVATRAHAGAYSCQAQDAQGTRSSRPAALQVLYAPQDAVLSSFRDSRARSMAVIQCTVDSEPPAELALSHDGKVLATSSGVHSLASGTGHVQVARNALRLQVQDVPAGDDTYVCTAQNLLGSISTIGRLQVEGARVVAEPGLDVPEGAALNLSCRLLGGPGPVGNSTFAWFWNDRRLHAEPVPTLAFTHVARAQAGMYHCLAELPTGAAASAPVMLRVLYPPKTPTMMVFVEPEGGLRGILDCRVDSEPLASLTLHLGSRLVASSQPQGAPAEPHIHVLASPNALRVDIEALRPSDQGEYICSASNVLGSASTSTYFGVRALHRLHQFQQLLWVLGLLVGLLLLLLGLGACYTWRRRRVCKQSMGENSVEMAFQKETTQLIDPDAATCETSTCAPPLG</sequence>
<dbReference type="EMBL" id="AF230073">
    <property type="protein sequence ID" value="AAK00757.1"/>
    <property type="molecule type" value="mRNA"/>
</dbReference>
<dbReference type="EMBL" id="AL109804">
    <property type="status" value="NOT_ANNOTATED_CDS"/>
    <property type="molecule type" value="Genomic_DNA"/>
</dbReference>
<dbReference type="EMBL" id="AK024459">
    <property type="protein sequence ID" value="BAB15749.1"/>
    <property type="molecule type" value="mRNA"/>
</dbReference>
<dbReference type="EMBL" id="AK024462">
    <property type="protein sequence ID" value="BAB15752.1"/>
    <property type="molecule type" value="mRNA"/>
</dbReference>
<dbReference type="EMBL" id="AK024479">
    <property type="protein sequence ID" value="BAB15769.1"/>
    <property type="molecule type" value="mRNA"/>
</dbReference>
<dbReference type="EMBL" id="AK057560">
    <property type="protein sequence ID" value="BAB71527.1"/>
    <property type="molecule type" value="mRNA"/>
</dbReference>
<dbReference type="CCDS" id="CCDS13060.1">
    <molecule id="Q9BZZ2-1"/>
</dbReference>
<dbReference type="RefSeq" id="NP_001354018.1">
    <molecule id="Q9BZZ2-3"/>
    <property type="nucleotide sequence ID" value="NM_001367089.1"/>
</dbReference>
<dbReference type="RefSeq" id="NP_075556.1">
    <molecule id="Q9BZZ2-1"/>
    <property type="nucleotide sequence ID" value="NM_023068.4"/>
</dbReference>
<dbReference type="RefSeq" id="XP_006723673.1">
    <property type="nucleotide sequence ID" value="XM_006723610.3"/>
</dbReference>
<dbReference type="RefSeq" id="XP_011527626.1">
    <property type="nucleotide sequence ID" value="XM_011529324.2"/>
</dbReference>
<dbReference type="RefSeq" id="XP_011527627.1">
    <property type="nucleotide sequence ID" value="XM_011529325.2"/>
</dbReference>
<dbReference type="RefSeq" id="XP_011527628.1">
    <property type="nucleotide sequence ID" value="XM_011529326.2"/>
</dbReference>
<dbReference type="RefSeq" id="XP_011527629.1">
    <property type="nucleotide sequence ID" value="XM_011529327.2"/>
</dbReference>
<dbReference type="RefSeq" id="XP_011527630.1">
    <property type="nucleotide sequence ID" value="XM_011529328.2"/>
</dbReference>
<dbReference type="RefSeq" id="XP_011527631.1">
    <property type="nucleotide sequence ID" value="XM_011529329.1"/>
</dbReference>
<dbReference type="SMR" id="Q9BZZ2"/>
<dbReference type="BioGRID" id="112498">
    <property type="interactions" value="3"/>
</dbReference>
<dbReference type="FunCoup" id="Q9BZZ2">
    <property type="interactions" value="190"/>
</dbReference>
<dbReference type="STRING" id="9606.ENSP00000341141"/>
<dbReference type="DrugBank" id="DB02379">
    <property type="generic name" value="Beta-D-Glucose"/>
</dbReference>
<dbReference type="DrugBank" id="DB03721">
    <property type="generic name" value="N-acetyl-alpha-neuraminic acid"/>
</dbReference>
<dbReference type="GlyCosmos" id="Q9BZZ2">
    <property type="glycosylation" value="14 sites, No reported glycans"/>
</dbReference>
<dbReference type="GlyGen" id="Q9BZZ2">
    <property type="glycosylation" value="16 sites, 13 N-linked glycans (5 sites)"/>
</dbReference>
<dbReference type="iPTMnet" id="Q9BZZ2"/>
<dbReference type="PhosphoSitePlus" id="Q9BZZ2"/>
<dbReference type="SwissPalm" id="Q9BZZ2"/>
<dbReference type="BioMuta" id="SIGLEC1"/>
<dbReference type="DMDM" id="18202745"/>
<dbReference type="MassIVE" id="Q9BZZ2"/>
<dbReference type="PaxDb" id="9606-ENSP00000341141"/>
<dbReference type="PeptideAtlas" id="Q9BZZ2"/>
<dbReference type="ProteomicsDB" id="79923">
    <molecule id="Q9BZZ2-1"/>
</dbReference>
<dbReference type="ProteomicsDB" id="79924">
    <molecule id="Q9BZZ2-2"/>
</dbReference>
<dbReference type="ProteomicsDB" id="79925">
    <molecule id="Q9BZZ2-3"/>
</dbReference>
<dbReference type="Antibodypedia" id="7559">
    <property type="antibodies" value="722 antibodies from 33 providers"/>
</dbReference>
<dbReference type="CPTC" id="Q9BZZ2">
    <property type="antibodies" value="1 antibody"/>
</dbReference>
<dbReference type="DNASU" id="6614"/>
<dbReference type="Ensembl" id="ENST00000344754.6">
    <molecule id="Q9BZZ2-1"/>
    <property type="protein sequence ID" value="ENSP00000341141.4"/>
    <property type="gene ID" value="ENSG00000088827.14"/>
</dbReference>
<dbReference type="Ensembl" id="ENST00000707083.1">
    <molecule id="Q9BZZ2-3"/>
    <property type="protein sequence ID" value="ENSP00000516734.1"/>
    <property type="gene ID" value="ENSG00000088827.14"/>
</dbReference>
<dbReference type="GeneID" id="6614"/>
<dbReference type="KEGG" id="hsa:6614"/>
<dbReference type="MANE-Select" id="ENST00000344754.6">
    <property type="protein sequence ID" value="ENSP00000341141.4"/>
    <property type="RefSeq nucleotide sequence ID" value="NM_023068.4"/>
    <property type="RefSeq protein sequence ID" value="NP_075556.1"/>
</dbReference>
<dbReference type="UCSC" id="uc002wja.3">
    <molecule id="Q9BZZ2-1"/>
    <property type="organism name" value="human"/>
</dbReference>
<dbReference type="AGR" id="HGNC:11127"/>
<dbReference type="CTD" id="6614"/>
<dbReference type="DisGeNET" id="6614"/>
<dbReference type="GeneCards" id="SIGLEC1"/>
<dbReference type="HGNC" id="HGNC:11127">
    <property type="gene designation" value="SIGLEC1"/>
</dbReference>
<dbReference type="HPA" id="ENSG00000088827">
    <property type="expression patterns" value="Low tissue specificity"/>
</dbReference>
<dbReference type="MIM" id="600751">
    <property type="type" value="gene"/>
</dbReference>
<dbReference type="neXtProt" id="NX_Q9BZZ2"/>
<dbReference type="OpenTargets" id="ENSG00000088827"/>
<dbReference type="PharmGKB" id="PA35976"/>
<dbReference type="VEuPathDB" id="HostDB:ENSG00000088827"/>
<dbReference type="eggNOG" id="KOG4475">
    <property type="taxonomic scope" value="Eukaryota"/>
</dbReference>
<dbReference type="GeneTree" id="ENSGT01120000271890"/>
<dbReference type="HOGENOM" id="CLU_243945_0_0_1"/>
<dbReference type="InParanoid" id="Q9BZZ2"/>
<dbReference type="OMA" id="VTFNSQK"/>
<dbReference type="OrthoDB" id="10039395at2759"/>
<dbReference type="PAN-GO" id="Q9BZZ2">
    <property type="GO annotations" value="5 GO annotations based on evolutionary models"/>
</dbReference>
<dbReference type="PhylomeDB" id="Q9BZZ2"/>
<dbReference type="TreeFam" id="TF334827"/>
<dbReference type="PathwayCommons" id="Q9BZZ2"/>
<dbReference type="Reactome" id="R-HSA-198933">
    <property type="pathway name" value="Immunoregulatory interactions between a Lymphoid and a non-Lymphoid cell"/>
</dbReference>
<dbReference type="SignaLink" id="Q9BZZ2"/>
<dbReference type="BioGRID-ORCS" id="6614">
    <property type="hits" value="18 hits in 1149 CRISPR screens"/>
</dbReference>
<dbReference type="ChiTaRS" id="SIGLEC1">
    <property type="organism name" value="human"/>
</dbReference>
<dbReference type="GenomeRNAi" id="6614"/>
<dbReference type="Pharos" id="Q9BZZ2">
    <property type="development level" value="Tbio"/>
</dbReference>
<dbReference type="PRO" id="PR:Q9BZZ2"/>
<dbReference type="Proteomes" id="UP000005640">
    <property type="component" value="Chromosome 20"/>
</dbReference>
<dbReference type="RNAct" id="Q9BZZ2">
    <property type="molecule type" value="protein"/>
</dbReference>
<dbReference type="Bgee" id="ENSG00000088827">
    <property type="expression patterns" value="Expressed in right adrenal gland cortex and 141 other cell types or tissues"/>
</dbReference>
<dbReference type="ExpressionAtlas" id="Q9BZZ2">
    <property type="expression patterns" value="baseline and differential"/>
</dbReference>
<dbReference type="GO" id="GO:0005769">
    <property type="term" value="C:early endosome"/>
    <property type="evidence" value="ECO:0000318"/>
    <property type="project" value="GO_Central"/>
</dbReference>
<dbReference type="GO" id="GO:0005576">
    <property type="term" value="C:extracellular region"/>
    <property type="evidence" value="ECO:0007669"/>
    <property type="project" value="UniProtKB-SubCell"/>
</dbReference>
<dbReference type="GO" id="GO:0005770">
    <property type="term" value="C:late endosome"/>
    <property type="evidence" value="ECO:0000318"/>
    <property type="project" value="GO_Central"/>
</dbReference>
<dbReference type="GO" id="GO:0016020">
    <property type="term" value="C:membrane"/>
    <property type="evidence" value="ECO:0000303"/>
    <property type="project" value="UniProtKB"/>
</dbReference>
<dbReference type="GO" id="GO:0005886">
    <property type="term" value="C:plasma membrane"/>
    <property type="evidence" value="ECO:0000314"/>
    <property type="project" value="UniProt"/>
</dbReference>
<dbReference type="GO" id="GO:0030246">
    <property type="term" value="F:carbohydrate binding"/>
    <property type="evidence" value="ECO:0000303"/>
    <property type="project" value="UniProtKB"/>
</dbReference>
<dbReference type="GO" id="GO:0046790">
    <property type="term" value="F:virion binding"/>
    <property type="evidence" value="ECO:0000318"/>
    <property type="project" value="GO_Central"/>
</dbReference>
<dbReference type="GO" id="GO:0098609">
    <property type="term" value="P:cell-cell adhesion"/>
    <property type="evidence" value="ECO:0000303"/>
    <property type="project" value="UniProtKB"/>
</dbReference>
<dbReference type="GO" id="GO:0007160">
    <property type="term" value="P:cell-matrix adhesion"/>
    <property type="evidence" value="ECO:0000303"/>
    <property type="project" value="UniProtKB"/>
</dbReference>
<dbReference type="GO" id="GO:0075512">
    <property type="term" value="P:clathrin-dependent endocytosis of virus by host cell"/>
    <property type="evidence" value="ECO:0000318"/>
    <property type="project" value="GO_Central"/>
</dbReference>
<dbReference type="GO" id="GO:0006954">
    <property type="term" value="P:inflammatory response"/>
    <property type="evidence" value="ECO:0000303"/>
    <property type="project" value="UniProtKB"/>
</dbReference>
<dbReference type="GO" id="GO:0032480">
    <property type="term" value="P:negative regulation of type I interferon production"/>
    <property type="evidence" value="ECO:0000314"/>
    <property type="project" value="UniProt"/>
</dbReference>
<dbReference type="CDD" id="cd00096">
    <property type="entry name" value="Ig"/>
    <property type="match status" value="3"/>
</dbReference>
<dbReference type="FunFam" id="2.60.40.10:FF:000921">
    <property type="entry name" value="sialoadhesin isoform X1"/>
    <property type="match status" value="5"/>
</dbReference>
<dbReference type="FunFam" id="2.60.40.10:FF:001277">
    <property type="entry name" value="sialoadhesin isoform X1"/>
    <property type="match status" value="5"/>
</dbReference>
<dbReference type="Gene3D" id="2.60.40.10">
    <property type="entry name" value="Immunoglobulins"/>
    <property type="match status" value="17"/>
</dbReference>
<dbReference type="InterPro" id="IPR013162">
    <property type="entry name" value="CD80_C2-set"/>
</dbReference>
<dbReference type="InterPro" id="IPR007110">
    <property type="entry name" value="Ig-like_dom"/>
</dbReference>
<dbReference type="InterPro" id="IPR036179">
    <property type="entry name" value="Ig-like_dom_sf"/>
</dbReference>
<dbReference type="InterPro" id="IPR013783">
    <property type="entry name" value="Ig-like_fold"/>
</dbReference>
<dbReference type="InterPro" id="IPR013098">
    <property type="entry name" value="Ig_I-set"/>
</dbReference>
<dbReference type="InterPro" id="IPR003599">
    <property type="entry name" value="Ig_sub"/>
</dbReference>
<dbReference type="InterPro" id="IPR003598">
    <property type="entry name" value="Ig_sub2"/>
</dbReference>
<dbReference type="InterPro" id="IPR013106">
    <property type="entry name" value="Ig_V-set"/>
</dbReference>
<dbReference type="PANTHER" id="PTHR47243">
    <property type="entry name" value="SIALOADHESIN"/>
    <property type="match status" value="1"/>
</dbReference>
<dbReference type="PANTHER" id="PTHR47243:SF1">
    <property type="entry name" value="SIALOADHESIN"/>
    <property type="match status" value="1"/>
</dbReference>
<dbReference type="Pfam" id="PF08205">
    <property type="entry name" value="C2-set_2"/>
    <property type="match status" value="1"/>
</dbReference>
<dbReference type="Pfam" id="PF07679">
    <property type="entry name" value="I-set"/>
    <property type="match status" value="3"/>
</dbReference>
<dbReference type="Pfam" id="PF13895">
    <property type="entry name" value="Ig_2"/>
    <property type="match status" value="6"/>
</dbReference>
<dbReference type="Pfam" id="PF07686">
    <property type="entry name" value="V-set"/>
    <property type="match status" value="1"/>
</dbReference>
<dbReference type="SMART" id="SM00409">
    <property type="entry name" value="IG"/>
    <property type="match status" value="17"/>
</dbReference>
<dbReference type="SMART" id="SM00408">
    <property type="entry name" value="IGc2"/>
    <property type="match status" value="14"/>
</dbReference>
<dbReference type="SUPFAM" id="SSF48726">
    <property type="entry name" value="Immunoglobulin"/>
    <property type="match status" value="11"/>
</dbReference>
<dbReference type="PROSITE" id="PS50835">
    <property type="entry name" value="IG_LIKE"/>
    <property type="match status" value="14"/>
</dbReference>
<comment type="function">
    <text evidence="2 5 6 7 9 10">Macrophage-restricted adhesion molecule that mediates sialic-acid dependent binding to lymphocytes, including granulocytes, monocytes, natural killer cells, B-cells and CD8 T-cells. Plays a crucial role in limiting bacterial dissemination by engaging sialylated bacteria to promote effective phagocytosis and antigen presentation for the adaptive immune response (PubMed:12940982, PubMed:33489013). Mediates the uptake of various enveloped viruses via sialic acid recognition and subsequently induces the formation of intracellular compartments filled with virions (VCCs) (PubMed:28129379). In turn, enhances macrophage-to-T-cell transmission of several viruses including HIV-1 or SARS-CoV-2 (PubMed:28129379, PubMed:34782760). Acts as an endocytic receptor mediating clathrin dependent endocytosis. Preferentially binds to alpha-2,3-linked sialic acid (PubMed:12940982). Binds to SPN/CD43 on T-cells (By similarity). May play a role in hemopoiesis. Plays a role in the inhibition of antiviral innate immune by promoting TBK1 degradation via TYROBP and TRIM27-mediated ubiquitination (PubMed:26358190).</text>
</comment>
<comment type="function">
    <text evidence="8">(Microbial infection) Facilitates viral cytoplasmic entry into activated dendritic cells via recognition of sialylated gangliosides pesent on viral membrane.</text>
</comment>
<comment type="subunit">
    <text evidence="2 6">Interacts with TYROBP. Interacts with CLEC10A (By similarity).</text>
</comment>
<comment type="subcellular location">
    <molecule>Isoform 1</molecule>
    <subcellularLocation>
        <location evidence="7">Cell membrane</location>
        <topology>Single-pass type I membrane protein</topology>
    </subcellularLocation>
</comment>
<comment type="subcellular location">
    <molecule>Isoform 2</molecule>
    <subcellularLocation>
        <location>Secreted</location>
    </subcellularLocation>
</comment>
<comment type="alternative products">
    <event type="alternative splicing"/>
    <isoform>
        <id>Q9BZZ2-1</id>
        <name>1</name>
        <sequence type="displayed"/>
    </isoform>
    <isoform>
        <id>Q9BZZ2-2</id>
        <name>2</name>
        <sequence type="described" ref="VSP_002571"/>
    </isoform>
    <isoform>
        <id>Q9BZZ2-3</id>
        <name>3</name>
        <sequence type="described" ref="VSP_002572"/>
    </isoform>
    <text>Additional isoforms seem to exist.</text>
</comment>
<comment type="tissue specificity">
    <text>Expressed by macrophages in various tissues. High levels are found in spleen, lymph node, perivascular macrophages in brain and lower levels in bone marrow, liver Kupffer cells and lamina propria of colon and lung. Also expressed by inflammatory macrophages in rheumatoid arthritis.</text>
</comment>
<comment type="induction">
    <text evidence="6 7">By interferon-alpha (PubMed:28129379). By viral infection (PubMed:26358190).</text>
</comment>
<comment type="similarity">
    <text evidence="13">Belongs to the immunoglobulin superfamily. SIGLEC (sialic acid binding Ig-like lectin) family.</text>
</comment>
<comment type="online information" name="Functional Glycomics Gateway - Glycan Binding">
    <link uri="http://www.functionalglycomics.org/glycomics/GBPServlet?&amp;operationType=view&amp;cbpId=cbp_hum_Itlect_267"/>
    <text>Siglec-1</text>
</comment>
<protein>
    <recommendedName>
        <fullName>Sialoadhesin</fullName>
    </recommendedName>
    <alternativeName>
        <fullName>Sialic acid-binding Ig-like lectin 1</fullName>
        <shortName>Siglec-1</shortName>
    </alternativeName>
    <cdAntigenName>CD169</cdAntigenName>
</protein>
<accession>Q9BZZ2</accession>
<accession>Q96DL4</accession>
<accession>Q9GZS5</accession>
<accession>Q9H1H6</accession>
<accession>Q9H1H7</accession>
<accession>Q9H7L7</accession>
<organism>
    <name type="scientific">Homo sapiens</name>
    <name type="common">Human</name>
    <dbReference type="NCBI Taxonomy" id="9606"/>
    <lineage>
        <taxon>Eukaryota</taxon>
        <taxon>Metazoa</taxon>
        <taxon>Chordata</taxon>
        <taxon>Craniata</taxon>
        <taxon>Vertebrata</taxon>
        <taxon>Euteleostomi</taxon>
        <taxon>Mammalia</taxon>
        <taxon>Eutheria</taxon>
        <taxon>Euarchontoglires</taxon>
        <taxon>Primates</taxon>
        <taxon>Haplorrhini</taxon>
        <taxon>Catarrhini</taxon>
        <taxon>Hominidae</taxon>
        <taxon>Homo</taxon>
    </lineage>
</organism>